<protein>
    <recommendedName>
        <fullName evidence="4">Conotoxin Tx6.6</fullName>
    </recommendedName>
</protein>
<organism>
    <name type="scientific">Conus textile</name>
    <name type="common">Cloth-of-gold cone</name>
    <dbReference type="NCBI Taxonomy" id="6494"/>
    <lineage>
        <taxon>Eukaryota</taxon>
        <taxon>Metazoa</taxon>
        <taxon>Spiralia</taxon>
        <taxon>Lophotrochozoa</taxon>
        <taxon>Mollusca</taxon>
        <taxon>Gastropoda</taxon>
        <taxon>Caenogastropoda</taxon>
        <taxon>Neogastropoda</taxon>
        <taxon>Conoidea</taxon>
        <taxon>Conidae</taxon>
        <taxon>Conus</taxon>
        <taxon>Cylinder</taxon>
    </lineage>
</organism>
<reference key="1">
    <citation type="patent" date="2004-07-23" number="US6762165">
        <title>O-superfamily conotoxin peptides.</title>
        <authorList>
            <person name="Olivera B.M."/>
            <person name="Cartier G.E."/>
            <person name="Watkins M."/>
            <person name="Hillyard D.R."/>
            <person name="McIntosh J.M."/>
            <person name="Layer R.T."/>
            <person name="Jones R.M."/>
        </authorList>
    </citation>
    <scope>NUCLEOTIDE SEQUENCE [GENOMIC DNA]</scope>
</reference>
<reference key="2">
    <citation type="journal article" date="2012" name="J. Proteome Res.">
        <title>Constrained de novo sequencing of conotoxins.</title>
        <authorList>
            <person name="Bhatia S."/>
            <person name="Kil Y.J."/>
            <person name="Ueberheide B."/>
            <person name="Chait B.T."/>
            <person name="Tayo L."/>
            <person name="Cruz L."/>
            <person name="Lu B."/>
            <person name="Yates J.R. III"/>
            <person name="Bern M."/>
        </authorList>
    </citation>
    <scope>IDENTIFICATION BY MASS SPECTROMETRY</scope>
    <scope>SUBCELLULAR LOCATION</scope>
    <scope>AMIDATION AT ALA-82</scope>
    <source>
        <tissue>Venom</tissue>
    </source>
</reference>
<sequence>MKLTCVMIVAVLFLTAWTLVMADDSNNGLANLFSKLRDEMEDPEGSKLEKKDCQEKWDYCPVPFLGSRYCCDGFICPSFFCA</sequence>
<accession>P0DPM4</accession>
<comment type="function">
    <text evidence="4">Omega-conotoxins act at presynaptic membranes, they bind and block voltage-gated calcium channels (Cav).</text>
</comment>
<comment type="subcellular location">
    <subcellularLocation>
        <location evidence="3">Secreted</location>
    </subcellularLocation>
</comment>
<comment type="tissue specificity">
    <text evidence="5">Expressed by the venom duct.</text>
</comment>
<comment type="domain">
    <text evidence="1">The presence of a 'disulfide through disulfide knot' structurally defines this protein as a knottin.</text>
</comment>
<comment type="domain">
    <text evidence="4">The cysteine framework is VI/VII (C-C-CC-C-C).</text>
</comment>
<comment type="similarity">
    <text evidence="4">Belongs to the O1 superfamily.</text>
</comment>
<proteinExistence type="evidence at protein level"/>
<name>I166_CONTE</name>
<dbReference type="SMR" id="P0DPM4"/>
<dbReference type="GO" id="GO:0005576">
    <property type="term" value="C:extracellular region"/>
    <property type="evidence" value="ECO:0007669"/>
    <property type="project" value="UniProtKB-SubCell"/>
</dbReference>
<dbReference type="GO" id="GO:0005246">
    <property type="term" value="F:calcium channel regulator activity"/>
    <property type="evidence" value="ECO:0007669"/>
    <property type="project" value="UniProtKB-KW"/>
</dbReference>
<dbReference type="GO" id="GO:0008200">
    <property type="term" value="F:ion channel inhibitor activity"/>
    <property type="evidence" value="ECO:0007669"/>
    <property type="project" value="InterPro"/>
</dbReference>
<dbReference type="GO" id="GO:0090729">
    <property type="term" value="F:toxin activity"/>
    <property type="evidence" value="ECO:0007669"/>
    <property type="project" value="UniProtKB-KW"/>
</dbReference>
<dbReference type="InterPro" id="IPR004214">
    <property type="entry name" value="Conotoxin"/>
</dbReference>
<dbReference type="InterPro" id="IPR012321">
    <property type="entry name" value="Conotoxin_omega-typ_CS"/>
</dbReference>
<dbReference type="Pfam" id="PF02950">
    <property type="entry name" value="Conotoxin"/>
    <property type="match status" value="1"/>
</dbReference>
<dbReference type="SUPFAM" id="SSF57059">
    <property type="entry name" value="omega toxin-like"/>
    <property type="match status" value="1"/>
</dbReference>
<dbReference type="PROSITE" id="PS60004">
    <property type="entry name" value="OMEGA_CONOTOXIN"/>
    <property type="match status" value="1"/>
</dbReference>
<evidence type="ECO:0000250" key="1">
    <source>
        <dbReference type="UniProtKB" id="Q26443"/>
    </source>
</evidence>
<evidence type="ECO:0000255" key="2"/>
<evidence type="ECO:0000269" key="3">
    <source>
    </source>
</evidence>
<evidence type="ECO:0000305" key="4"/>
<evidence type="ECO:0000305" key="5">
    <source>
    </source>
</evidence>
<feature type="signal peptide" evidence="2">
    <location>
        <begin position="1"/>
        <end position="19"/>
    </location>
</feature>
<feature type="propeptide" id="PRO_0000445065" evidence="4">
    <location>
        <begin position="20"/>
        <end position="51"/>
    </location>
</feature>
<feature type="peptide" id="PRO_0000445066" description="Conotoxin Tx6.6" evidence="3">
    <location>
        <begin position="52"/>
        <end position="82"/>
    </location>
</feature>
<feature type="modified residue" description="Alanine amide; partial" evidence="3">
    <location>
        <position position="82"/>
    </location>
</feature>
<feature type="disulfide bond" evidence="1">
    <location>
        <begin position="53"/>
        <end position="71"/>
    </location>
</feature>
<feature type="disulfide bond" evidence="1">
    <location>
        <begin position="60"/>
        <end position="76"/>
    </location>
</feature>
<feature type="disulfide bond" evidence="1">
    <location>
        <begin position="70"/>
        <end position="81"/>
    </location>
</feature>
<keyword id="KW-0027">Amidation</keyword>
<keyword id="KW-0108">Calcium channel impairing toxin</keyword>
<keyword id="KW-1015">Disulfide bond</keyword>
<keyword id="KW-0872">Ion channel impairing toxin</keyword>
<keyword id="KW-0960">Knottin</keyword>
<keyword id="KW-0964">Secreted</keyword>
<keyword id="KW-0732">Signal</keyword>
<keyword id="KW-0800">Toxin</keyword>
<keyword id="KW-1218">Voltage-gated calcium channel impairing toxin</keyword>